<gene>
    <name type="primary">L3HYPDH</name>
</gene>
<sequence>MESALALPRLPPHDPGTPVLSVVDMHTGGEPLRIVLAGCPEVSGPTLLAKRRYMRQHLDHVRRRLMFEPRGHRDMYGAVLVPSELPDAHLGVLFLHNEGYSSMCGHAVLALGRFALDFGLVPATPAGTREARVNIHCPCGLVTAFVACEDGRSHGPVRFHSVPAFVLATDLMVDVPGHGKVVVDIAYGGAFYAFVTAEKLGLDICSAKTRDLVDAASAVTKAVKAQFKINHPDSEDLAFLYGTILTDGKDAYTKEPTTNICVFADEQVDRSPTGSGVIARIALQYHKGLLELNQTRAFKSSATGSVFTGKAVREAKCGDFKAVIVEVSGQAHYTGTASFIVEDDDPLRDGFLLK</sequence>
<name>T3HPD_PONAB</name>
<comment type="function">
    <text evidence="1">Catalyzes the dehydration of trans-3-hydroxy-L-proline to delta-1-pyrroline-2-carboxylate (Pyr2C).</text>
</comment>
<comment type="catalytic activity">
    <reaction>
        <text>trans-3-hydroxy-L-proline = 1-pyrroline-2-carboxylate + H2O</text>
        <dbReference type="Rhea" id="RHEA:10320"/>
        <dbReference type="ChEBI" id="CHEBI:15377"/>
        <dbReference type="ChEBI" id="CHEBI:39785"/>
        <dbReference type="ChEBI" id="CHEBI:57938"/>
        <dbReference type="EC" id="4.2.1.77"/>
    </reaction>
</comment>
<comment type="subunit">
    <text evidence="1">Homodimer.</text>
</comment>
<comment type="miscellaneous">
    <text evidence="1">In contrast to the T.cruzi proline racemase enzyme, lacks the conserved Cys at position 273 which is replaced by a Thr residue, transforming the racemase activity into dehydratase activity.</text>
</comment>
<comment type="similarity">
    <text evidence="2">Belongs to the proline racemase family.</text>
</comment>
<organism>
    <name type="scientific">Pongo abelii</name>
    <name type="common">Sumatran orangutan</name>
    <name type="synonym">Pongo pygmaeus abelii</name>
    <dbReference type="NCBI Taxonomy" id="9601"/>
    <lineage>
        <taxon>Eukaryota</taxon>
        <taxon>Metazoa</taxon>
        <taxon>Chordata</taxon>
        <taxon>Craniata</taxon>
        <taxon>Vertebrata</taxon>
        <taxon>Euteleostomi</taxon>
        <taxon>Mammalia</taxon>
        <taxon>Eutheria</taxon>
        <taxon>Euarchontoglires</taxon>
        <taxon>Primates</taxon>
        <taxon>Haplorrhini</taxon>
        <taxon>Catarrhini</taxon>
        <taxon>Hominidae</taxon>
        <taxon>Pongo</taxon>
    </lineage>
</organism>
<feature type="chain" id="PRO_0000288951" description="Trans-L-3-hydroxyproline dehydratase">
    <location>
        <begin position="1"/>
        <end position="354"/>
    </location>
</feature>
<feature type="active site" description="Proton acceptor" evidence="1">
    <location>
        <position position="104"/>
    </location>
</feature>
<feature type="binding site" evidence="1">
    <location>
        <begin position="105"/>
        <end position="106"/>
    </location>
    <ligand>
        <name>substrate</name>
    </ligand>
</feature>
<feature type="binding site" evidence="1">
    <location>
        <position position="269"/>
    </location>
    <ligand>
        <name>substrate</name>
    </ligand>
</feature>
<feature type="binding site" evidence="1">
    <location>
        <begin position="274"/>
        <end position="275"/>
    </location>
    <ligand>
        <name>substrate</name>
    </ligand>
</feature>
<keyword id="KW-0456">Lyase</keyword>
<keyword id="KW-1185">Reference proteome</keyword>
<reference key="1">
    <citation type="submission" date="2004-11" db="EMBL/GenBank/DDBJ databases">
        <authorList>
            <consortium name="The German cDNA consortium"/>
        </authorList>
    </citation>
    <scope>NUCLEOTIDE SEQUENCE [LARGE SCALE MRNA]</scope>
    <source>
        <tissue>Kidney</tissue>
    </source>
</reference>
<dbReference type="EC" id="4.2.1.77"/>
<dbReference type="EMBL" id="CR858454">
    <property type="protein sequence ID" value="CAH90682.1"/>
    <property type="molecule type" value="mRNA"/>
</dbReference>
<dbReference type="RefSeq" id="NP_001125373.1">
    <property type="nucleotide sequence ID" value="NM_001131901.2"/>
</dbReference>
<dbReference type="SMR" id="Q5RC28"/>
<dbReference type="FunCoup" id="Q5RC28">
    <property type="interactions" value="105"/>
</dbReference>
<dbReference type="STRING" id="9601.ENSPPYP00000006662"/>
<dbReference type="GeneID" id="100172276"/>
<dbReference type="KEGG" id="pon:100172276"/>
<dbReference type="CTD" id="112849"/>
<dbReference type="InParanoid" id="Q5RC28"/>
<dbReference type="Proteomes" id="UP000001595">
    <property type="component" value="Unplaced"/>
</dbReference>
<dbReference type="GO" id="GO:0016836">
    <property type="term" value="F:hydro-lyase activity"/>
    <property type="evidence" value="ECO:0000250"/>
    <property type="project" value="UniProtKB"/>
</dbReference>
<dbReference type="GO" id="GO:0050346">
    <property type="term" value="F:trans-L-3-hydroxyproline dehydratase activity"/>
    <property type="evidence" value="ECO:0007669"/>
    <property type="project" value="UniProtKB-EC"/>
</dbReference>
<dbReference type="FunFam" id="3.10.310.10:FF:000007">
    <property type="entry name" value="Trans-L-3-hydroxyproline dehydratase"/>
    <property type="match status" value="1"/>
</dbReference>
<dbReference type="Gene3D" id="3.10.310.10">
    <property type="entry name" value="Diaminopimelate Epimerase, Chain A, domain 1"/>
    <property type="match status" value="2"/>
</dbReference>
<dbReference type="InterPro" id="IPR008794">
    <property type="entry name" value="Pro_racemase_fam"/>
</dbReference>
<dbReference type="PANTHER" id="PTHR33442">
    <property type="entry name" value="TRANS-3-HYDROXY-L-PROLINE DEHYDRATASE"/>
    <property type="match status" value="1"/>
</dbReference>
<dbReference type="PANTHER" id="PTHR33442:SF1">
    <property type="entry name" value="TRANS-3-HYDROXY-L-PROLINE DEHYDRATASE"/>
    <property type="match status" value="1"/>
</dbReference>
<dbReference type="Pfam" id="PF05544">
    <property type="entry name" value="Pro_racemase"/>
    <property type="match status" value="1"/>
</dbReference>
<dbReference type="PIRSF" id="PIRSF029792">
    <property type="entry name" value="Pro_racemase"/>
    <property type="match status" value="1"/>
</dbReference>
<dbReference type="SFLD" id="SFLDS00028">
    <property type="entry name" value="Proline_Racemase"/>
    <property type="match status" value="1"/>
</dbReference>
<dbReference type="SUPFAM" id="SSF54506">
    <property type="entry name" value="Diaminopimelate epimerase-like"/>
    <property type="match status" value="1"/>
</dbReference>
<evidence type="ECO:0000250" key="1"/>
<evidence type="ECO:0000305" key="2"/>
<proteinExistence type="evidence at transcript level"/>
<accession>Q5RC28</accession>
<protein>
    <recommendedName>
        <fullName>Trans-L-3-hydroxyproline dehydratase</fullName>
        <ecNumber>4.2.1.77</ecNumber>
    </recommendedName>
    <alternativeName>
        <fullName>Trans-3-hydroxy-L-proline dehydratase</fullName>
    </alternativeName>
</protein>